<proteinExistence type="inferred from homology"/>
<feature type="chain" id="PRO_0000174592" description="S-adenosylmethionine synthase">
    <location>
        <begin position="1"/>
        <end position="397"/>
    </location>
</feature>
<feature type="region of interest" description="Flexible loop" evidence="1">
    <location>
        <begin position="101"/>
        <end position="111"/>
    </location>
</feature>
<feature type="binding site" description="in other chain" evidence="1">
    <location>
        <position position="17"/>
    </location>
    <ligand>
        <name>ATP</name>
        <dbReference type="ChEBI" id="CHEBI:30616"/>
        <note>ligand shared between two neighboring subunits</note>
    </ligand>
</feature>
<feature type="binding site" evidence="1">
    <location>
        <position position="19"/>
    </location>
    <ligand>
        <name>Mg(2+)</name>
        <dbReference type="ChEBI" id="CHEBI:18420"/>
    </ligand>
</feature>
<feature type="binding site" evidence="1">
    <location>
        <position position="45"/>
    </location>
    <ligand>
        <name>K(+)</name>
        <dbReference type="ChEBI" id="CHEBI:29103"/>
    </ligand>
</feature>
<feature type="binding site" description="in other chain" evidence="1">
    <location>
        <position position="58"/>
    </location>
    <ligand>
        <name>L-methionine</name>
        <dbReference type="ChEBI" id="CHEBI:57844"/>
        <note>ligand shared between two neighboring subunits</note>
    </ligand>
</feature>
<feature type="binding site" description="in other chain" evidence="1">
    <location>
        <position position="101"/>
    </location>
    <ligand>
        <name>L-methionine</name>
        <dbReference type="ChEBI" id="CHEBI:57844"/>
        <note>ligand shared between two neighboring subunits</note>
    </ligand>
</feature>
<feature type="binding site" description="in other chain" evidence="1">
    <location>
        <begin position="176"/>
        <end position="178"/>
    </location>
    <ligand>
        <name>ATP</name>
        <dbReference type="ChEBI" id="CHEBI:30616"/>
        <note>ligand shared between two neighboring subunits</note>
    </ligand>
</feature>
<feature type="binding site" description="in other chain" evidence="1">
    <location>
        <begin position="243"/>
        <end position="244"/>
    </location>
    <ligand>
        <name>ATP</name>
        <dbReference type="ChEBI" id="CHEBI:30616"/>
        <note>ligand shared between two neighboring subunits</note>
    </ligand>
</feature>
<feature type="binding site" evidence="1">
    <location>
        <position position="252"/>
    </location>
    <ligand>
        <name>ATP</name>
        <dbReference type="ChEBI" id="CHEBI:30616"/>
        <note>ligand shared between two neighboring subunits</note>
    </ligand>
</feature>
<feature type="binding site" evidence="1">
    <location>
        <position position="252"/>
    </location>
    <ligand>
        <name>L-methionine</name>
        <dbReference type="ChEBI" id="CHEBI:57844"/>
        <note>ligand shared between two neighboring subunits</note>
    </ligand>
</feature>
<feature type="binding site" description="in other chain" evidence="1">
    <location>
        <begin position="258"/>
        <end position="259"/>
    </location>
    <ligand>
        <name>ATP</name>
        <dbReference type="ChEBI" id="CHEBI:30616"/>
        <note>ligand shared between two neighboring subunits</note>
    </ligand>
</feature>
<feature type="binding site" evidence="1">
    <location>
        <position position="279"/>
    </location>
    <ligand>
        <name>ATP</name>
        <dbReference type="ChEBI" id="CHEBI:30616"/>
        <note>ligand shared between two neighboring subunits</note>
    </ligand>
</feature>
<feature type="binding site" description="in other chain" evidence="1">
    <location>
        <position position="283"/>
    </location>
    <ligand>
        <name>L-methionine</name>
        <dbReference type="ChEBI" id="CHEBI:57844"/>
        <note>ligand shared between two neighboring subunits</note>
    </ligand>
</feature>
<sequence length="397" mass="43641">MLNNKRLFTSESVTEGHPDKIADQVSDAILDAILKDDPNARVACETTVTTGMALIAGEISTTTYVDIPKVVRETIKEIGYTRAKYGYDYETMAILTAIDEQSPDIAQGVDKALEYRDKDSEEEIEATGAGDQGLMFGYATNETETYMPLAIYLSHQLAKRLSDVRKDGTLNYLRPDGKVQVTVEYDENDNPVRIDTIVVSTQHAEDVTLEQIQEDIKAHVIYPTVPENLINEQTKFYINPTGRFVIGGPQGDAGLTGRKIIVDTYGGYARHGGGCFSGKDPTKVDRSAAYAARYVAKNIVAAGLADQCEVQLAYAIGVAEPVSIAIDTFGTGKVSEGQLVEAVRKHFDLRPAGIIKMLDLKQPIYKQTAAYGHFGRTDVLFPWEKLDKVEELKDAVK</sequence>
<name>METK_STAAW</name>
<reference key="1">
    <citation type="journal article" date="2002" name="Lancet">
        <title>Genome and virulence determinants of high virulence community-acquired MRSA.</title>
        <authorList>
            <person name="Baba T."/>
            <person name="Takeuchi F."/>
            <person name="Kuroda M."/>
            <person name="Yuzawa H."/>
            <person name="Aoki K."/>
            <person name="Oguchi A."/>
            <person name="Nagai Y."/>
            <person name="Iwama N."/>
            <person name="Asano K."/>
            <person name="Naimi T."/>
            <person name="Kuroda H."/>
            <person name="Cui L."/>
            <person name="Yamamoto K."/>
            <person name="Hiramatsu K."/>
        </authorList>
    </citation>
    <scope>NUCLEOTIDE SEQUENCE [LARGE SCALE GENOMIC DNA]</scope>
    <source>
        <strain>MW2</strain>
    </source>
</reference>
<evidence type="ECO:0000255" key="1">
    <source>
        <dbReference type="HAMAP-Rule" id="MF_00086"/>
    </source>
</evidence>
<keyword id="KW-0067">ATP-binding</keyword>
<keyword id="KW-0963">Cytoplasm</keyword>
<keyword id="KW-0460">Magnesium</keyword>
<keyword id="KW-0479">Metal-binding</keyword>
<keyword id="KW-0547">Nucleotide-binding</keyword>
<keyword id="KW-0554">One-carbon metabolism</keyword>
<keyword id="KW-0630">Potassium</keyword>
<keyword id="KW-0808">Transferase</keyword>
<organism>
    <name type="scientific">Staphylococcus aureus (strain MW2)</name>
    <dbReference type="NCBI Taxonomy" id="196620"/>
    <lineage>
        <taxon>Bacteria</taxon>
        <taxon>Bacillati</taxon>
        <taxon>Bacillota</taxon>
        <taxon>Bacilli</taxon>
        <taxon>Bacillales</taxon>
        <taxon>Staphylococcaceae</taxon>
        <taxon>Staphylococcus</taxon>
    </lineage>
</organism>
<accession>Q8NVZ9</accession>
<gene>
    <name evidence="1" type="primary">metK</name>
    <name type="ordered locus">MW1728</name>
</gene>
<comment type="function">
    <text evidence="1">Catalyzes the formation of S-adenosylmethionine (AdoMet) from methionine and ATP. The overall synthetic reaction is composed of two sequential steps, AdoMet formation and the subsequent tripolyphosphate hydrolysis which occurs prior to release of AdoMet from the enzyme.</text>
</comment>
<comment type="catalytic activity">
    <reaction evidence="1">
        <text>L-methionine + ATP + H2O = S-adenosyl-L-methionine + phosphate + diphosphate</text>
        <dbReference type="Rhea" id="RHEA:21080"/>
        <dbReference type="ChEBI" id="CHEBI:15377"/>
        <dbReference type="ChEBI" id="CHEBI:30616"/>
        <dbReference type="ChEBI" id="CHEBI:33019"/>
        <dbReference type="ChEBI" id="CHEBI:43474"/>
        <dbReference type="ChEBI" id="CHEBI:57844"/>
        <dbReference type="ChEBI" id="CHEBI:59789"/>
        <dbReference type="EC" id="2.5.1.6"/>
    </reaction>
</comment>
<comment type="cofactor">
    <cofactor evidence="1">
        <name>Mg(2+)</name>
        <dbReference type="ChEBI" id="CHEBI:18420"/>
    </cofactor>
    <text evidence="1">Binds 2 divalent ions per subunit.</text>
</comment>
<comment type="cofactor">
    <cofactor evidence="1">
        <name>K(+)</name>
        <dbReference type="ChEBI" id="CHEBI:29103"/>
    </cofactor>
    <text evidence="1">Binds 1 potassium ion per subunit.</text>
</comment>
<comment type="pathway">
    <text evidence="1">Amino-acid biosynthesis; S-adenosyl-L-methionine biosynthesis; S-adenosyl-L-methionine from L-methionine: step 1/1.</text>
</comment>
<comment type="subunit">
    <text evidence="1">Homotetramer; dimer of dimers.</text>
</comment>
<comment type="subcellular location">
    <subcellularLocation>
        <location evidence="1">Cytoplasm</location>
    </subcellularLocation>
</comment>
<comment type="similarity">
    <text evidence="1">Belongs to the AdoMet synthase family.</text>
</comment>
<protein>
    <recommendedName>
        <fullName evidence="1">S-adenosylmethionine synthase</fullName>
        <shortName evidence="1">AdoMet synthase</shortName>
        <ecNumber evidence="1">2.5.1.6</ecNumber>
    </recommendedName>
    <alternativeName>
        <fullName evidence="1">MAT</fullName>
    </alternativeName>
    <alternativeName>
        <fullName evidence="1">Methionine adenosyltransferase</fullName>
    </alternativeName>
</protein>
<dbReference type="EC" id="2.5.1.6" evidence="1"/>
<dbReference type="EMBL" id="BA000033">
    <property type="protein sequence ID" value="BAB95593.1"/>
    <property type="molecule type" value="Genomic_DNA"/>
</dbReference>
<dbReference type="RefSeq" id="WP_000933822.1">
    <property type="nucleotide sequence ID" value="NC_003923.1"/>
</dbReference>
<dbReference type="SMR" id="Q8NVZ9"/>
<dbReference type="KEGG" id="sam:MW1728"/>
<dbReference type="HOGENOM" id="CLU_041802_1_1_9"/>
<dbReference type="UniPathway" id="UPA00315">
    <property type="reaction ID" value="UER00080"/>
</dbReference>
<dbReference type="GO" id="GO:0005737">
    <property type="term" value="C:cytoplasm"/>
    <property type="evidence" value="ECO:0007669"/>
    <property type="project" value="UniProtKB-SubCell"/>
</dbReference>
<dbReference type="GO" id="GO:0005524">
    <property type="term" value="F:ATP binding"/>
    <property type="evidence" value="ECO:0007669"/>
    <property type="project" value="UniProtKB-UniRule"/>
</dbReference>
<dbReference type="GO" id="GO:0000287">
    <property type="term" value="F:magnesium ion binding"/>
    <property type="evidence" value="ECO:0007669"/>
    <property type="project" value="UniProtKB-UniRule"/>
</dbReference>
<dbReference type="GO" id="GO:0004478">
    <property type="term" value="F:methionine adenosyltransferase activity"/>
    <property type="evidence" value="ECO:0007669"/>
    <property type="project" value="UniProtKB-UniRule"/>
</dbReference>
<dbReference type="GO" id="GO:0006730">
    <property type="term" value="P:one-carbon metabolic process"/>
    <property type="evidence" value="ECO:0007669"/>
    <property type="project" value="UniProtKB-KW"/>
</dbReference>
<dbReference type="GO" id="GO:0006556">
    <property type="term" value="P:S-adenosylmethionine biosynthetic process"/>
    <property type="evidence" value="ECO:0007669"/>
    <property type="project" value="UniProtKB-UniRule"/>
</dbReference>
<dbReference type="CDD" id="cd18079">
    <property type="entry name" value="S-AdoMet_synt"/>
    <property type="match status" value="1"/>
</dbReference>
<dbReference type="FunFam" id="3.30.300.10:FF:000003">
    <property type="entry name" value="S-adenosylmethionine synthase"/>
    <property type="match status" value="1"/>
</dbReference>
<dbReference type="FunFam" id="3.30.300.10:FF:000004">
    <property type="entry name" value="S-adenosylmethionine synthase"/>
    <property type="match status" value="1"/>
</dbReference>
<dbReference type="Gene3D" id="3.30.300.10">
    <property type="match status" value="3"/>
</dbReference>
<dbReference type="HAMAP" id="MF_00086">
    <property type="entry name" value="S_AdoMet_synth1"/>
    <property type="match status" value="1"/>
</dbReference>
<dbReference type="InterPro" id="IPR022631">
    <property type="entry name" value="ADOMET_SYNTHASE_CS"/>
</dbReference>
<dbReference type="InterPro" id="IPR022630">
    <property type="entry name" value="S-AdoMet_synt_C"/>
</dbReference>
<dbReference type="InterPro" id="IPR022629">
    <property type="entry name" value="S-AdoMet_synt_central"/>
</dbReference>
<dbReference type="InterPro" id="IPR022628">
    <property type="entry name" value="S-AdoMet_synt_N"/>
</dbReference>
<dbReference type="InterPro" id="IPR002133">
    <property type="entry name" value="S-AdoMet_synthetase"/>
</dbReference>
<dbReference type="InterPro" id="IPR022636">
    <property type="entry name" value="S-AdoMet_synthetase_sfam"/>
</dbReference>
<dbReference type="NCBIfam" id="TIGR01034">
    <property type="entry name" value="metK"/>
    <property type="match status" value="1"/>
</dbReference>
<dbReference type="PANTHER" id="PTHR11964">
    <property type="entry name" value="S-ADENOSYLMETHIONINE SYNTHETASE"/>
    <property type="match status" value="1"/>
</dbReference>
<dbReference type="Pfam" id="PF02773">
    <property type="entry name" value="S-AdoMet_synt_C"/>
    <property type="match status" value="1"/>
</dbReference>
<dbReference type="Pfam" id="PF02772">
    <property type="entry name" value="S-AdoMet_synt_M"/>
    <property type="match status" value="1"/>
</dbReference>
<dbReference type="Pfam" id="PF00438">
    <property type="entry name" value="S-AdoMet_synt_N"/>
    <property type="match status" value="1"/>
</dbReference>
<dbReference type="PIRSF" id="PIRSF000497">
    <property type="entry name" value="MAT"/>
    <property type="match status" value="1"/>
</dbReference>
<dbReference type="SUPFAM" id="SSF55973">
    <property type="entry name" value="S-adenosylmethionine synthetase"/>
    <property type="match status" value="3"/>
</dbReference>
<dbReference type="PROSITE" id="PS00376">
    <property type="entry name" value="ADOMET_SYNTHASE_1"/>
    <property type="match status" value="1"/>
</dbReference>
<dbReference type="PROSITE" id="PS00377">
    <property type="entry name" value="ADOMET_SYNTHASE_2"/>
    <property type="match status" value="1"/>
</dbReference>